<keyword id="KW-0025">Alternative splicing</keyword>
<keyword id="KW-0053">Apoptosis</keyword>
<keyword id="KW-0325">Glycoprotein</keyword>
<keyword id="KW-0472">Membrane</keyword>
<keyword id="KW-1185">Reference proteome</keyword>
<keyword id="KW-0732">Signal</keyword>
<keyword id="KW-0812">Transmembrane</keyword>
<keyword id="KW-1133">Transmembrane helix</keyword>
<dbReference type="EMBL" id="AF353993">
    <property type="protein sequence ID" value="AAK35067.1"/>
    <property type="molecule type" value="mRNA"/>
</dbReference>
<dbReference type="EMBL" id="AK009511">
    <property type="status" value="NOT_ANNOTATED_CDS"/>
    <property type="molecule type" value="mRNA"/>
</dbReference>
<dbReference type="EMBL" id="AL671140">
    <property type="protein sequence ID" value="CAM26981.1"/>
    <property type="status" value="ALT_SEQ"/>
    <property type="molecule type" value="Genomic_DNA"/>
</dbReference>
<dbReference type="EMBL" id="AL671140">
    <property type="protein sequence ID" value="CAM26983.1"/>
    <property type="molecule type" value="Genomic_DNA"/>
</dbReference>
<dbReference type="EMBL" id="AL671140">
    <property type="protein sequence ID" value="CAM26984.1"/>
    <property type="molecule type" value="Genomic_DNA"/>
</dbReference>
<dbReference type="EMBL" id="BC089492">
    <property type="protein sequence ID" value="AAH89492.1"/>
    <property type="molecule type" value="mRNA"/>
</dbReference>
<dbReference type="CCDS" id="CCDS18374.1">
    <molecule id="Q99MB3-1"/>
</dbReference>
<dbReference type="RefSeq" id="NP_444387.1">
    <molecule id="Q99MB3-1"/>
    <property type="nucleotide sequence ID" value="NM_053157.2"/>
</dbReference>
<dbReference type="FunCoup" id="Q99MB3">
    <property type="interactions" value="1401"/>
</dbReference>
<dbReference type="STRING" id="10090.ENSMUSP00000099855"/>
<dbReference type="GlyConnect" id="2433">
    <molecule id="Q99MB3-2"/>
    <property type="glycosylation" value="2 N-Linked glycans (2 sites)"/>
</dbReference>
<dbReference type="GlyCosmos" id="Q99MB3">
    <property type="glycosylation" value="2 sites, No reported glycans"/>
</dbReference>
<dbReference type="GlyGen" id="Q99MB3">
    <property type="glycosylation" value="4 sites, 4 N-linked glycans (4 sites)"/>
</dbReference>
<dbReference type="PhosphoSitePlus" id="Q99MB3"/>
<dbReference type="PaxDb" id="10090-ENSMUSP00000099855"/>
<dbReference type="PeptideAtlas" id="Q99MB3"/>
<dbReference type="ProteomicsDB" id="259559">
    <molecule id="Q99MB3-1"/>
</dbReference>
<dbReference type="ProteomicsDB" id="259560">
    <molecule id="Q99MB3-2"/>
</dbReference>
<dbReference type="Antibodypedia" id="46902">
    <property type="antibodies" value="60 antibodies from 17 providers"/>
</dbReference>
<dbReference type="DNASU" id="94043"/>
<dbReference type="Ensembl" id="ENSMUST00000030292.12">
    <molecule id="Q99MB3-2"/>
    <property type="protein sequence ID" value="ENSMUSP00000030292.6"/>
    <property type="gene ID" value="ENSMUSG00000028563.17"/>
</dbReference>
<dbReference type="Ensembl" id="ENSMUST00000102793.11">
    <molecule id="Q99MB3-1"/>
    <property type="protein sequence ID" value="ENSMUSP00000099855.5"/>
    <property type="gene ID" value="ENSMUSG00000028563.17"/>
</dbReference>
<dbReference type="GeneID" id="94043"/>
<dbReference type="KEGG" id="mmu:94043"/>
<dbReference type="UCSC" id="uc033idg.1">
    <molecule id="Q99MB3-1"/>
    <property type="organism name" value="mouse"/>
</dbReference>
<dbReference type="AGR" id="MGI:2137022"/>
<dbReference type="CTD" id="83941"/>
<dbReference type="MGI" id="MGI:2137022">
    <property type="gene designation" value="Tm2d1"/>
</dbReference>
<dbReference type="VEuPathDB" id="HostDB:ENSMUSG00000028563"/>
<dbReference type="eggNOG" id="KOG4272">
    <property type="taxonomic scope" value="Eukaryota"/>
</dbReference>
<dbReference type="GeneTree" id="ENSGT00940000157668"/>
<dbReference type="HOGENOM" id="CLU_110523_0_0_1"/>
<dbReference type="InParanoid" id="Q99MB3"/>
<dbReference type="OMA" id="ETFRKPH"/>
<dbReference type="OrthoDB" id="5804096at2759"/>
<dbReference type="PhylomeDB" id="Q99MB3"/>
<dbReference type="TreeFam" id="TF314896"/>
<dbReference type="BioGRID-ORCS" id="94043">
    <property type="hits" value="8 hits in 84 CRISPR screens"/>
</dbReference>
<dbReference type="ChiTaRS" id="Tm2d1">
    <property type="organism name" value="mouse"/>
</dbReference>
<dbReference type="PRO" id="PR:Q99MB3"/>
<dbReference type="Proteomes" id="UP000000589">
    <property type="component" value="Chromosome 4"/>
</dbReference>
<dbReference type="RNAct" id="Q99MB3">
    <property type="molecule type" value="protein"/>
</dbReference>
<dbReference type="Bgee" id="ENSMUSG00000028563">
    <property type="expression patterns" value="Expressed in embryonic brain and 65 other cell types or tissues"/>
</dbReference>
<dbReference type="ExpressionAtlas" id="Q99MB3">
    <property type="expression patterns" value="baseline and differential"/>
</dbReference>
<dbReference type="GO" id="GO:0005886">
    <property type="term" value="C:plasma membrane"/>
    <property type="evidence" value="ECO:0000314"/>
    <property type="project" value="MGI"/>
</dbReference>
<dbReference type="GO" id="GO:0001540">
    <property type="term" value="F:amyloid-beta binding"/>
    <property type="evidence" value="ECO:0000314"/>
    <property type="project" value="MGI"/>
</dbReference>
<dbReference type="GO" id="GO:0004930">
    <property type="term" value="F:G protein-coupled receptor activity"/>
    <property type="evidence" value="ECO:0000314"/>
    <property type="project" value="MGI"/>
</dbReference>
<dbReference type="GO" id="GO:0097190">
    <property type="term" value="P:apoptotic signaling pathway"/>
    <property type="evidence" value="ECO:0000314"/>
    <property type="project" value="MGI"/>
</dbReference>
<dbReference type="InterPro" id="IPR007829">
    <property type="entry name" value="TM2"/>
</dbReference>
<dbReference type="InterPro" id="IPR050932">
    <property type="entry name" value="TM2D1-3-like"/>
</dbReference>
<dbReference type="PANTHER" id="PTHR21016">
    <property type="entry name" value="BETA-AMYLOID BINDING PROTEIN-RELATED"/>
    <property type="match status" value="1"/>
</dbReference>
<dbReference type="PANTHER" id="PTHR21016:SF1">
    <property type="entry name" value="TM2 DOMAIN-CONTAINING PROTEIN 1"/>
    <property type="match status" value="1"/>
</dbReference>
<dbReference type="Pfam" id="PF05154">
    <property type="entry name" value="TM2"/>
    <property type="match status" value="1"/>
</dbReference>
<organism>
    <name type="scientific">Mus musculus</name>
    <name type="common">Mouse</name>
    <dbReference type="NCBI Taxonomy" id="10090"/>
    <lineage>
        <taxon>Eukaryota</taxon>
        <taxon>Metazoa</taxon>
        <taxon>Chordata</taxon>
        <taxon>Craniata</taxon>
        <taxon>Vertebrata</taxon>
        <taxon>Euteleostomi</taxon>
        <taxon>Mammalia</taxon>
        <taxon>Eutheria</taxon>
        <taxon>Euarchontoglires</taxon>
        <taxon>Glires</taxon>
        <taxon>Rodentia</taxon>
        <taxon>Myomorpha</taxon>
        <taxon>Muroidea</taxon>
        <taxon>Muridae</taxon>
        <taxon>Murinae</taxon>
        <taxon>Mus</taxon>
        <taxon>Mus</taxon>
    </lineage>
</organism>
<sequence>MAAAWPAGRASPAAGPPGLLRTLWLVTVAAGHCGAAASGAVGGEETPKCEDLRVGQYICKEPKINDATQEPVNCTNYTAHVQCFPAPKITCKDLSGNETHFTGSEVGFLKPISCRNVNGYSYKVAVALSLFLGWLGADRFYLGYPALGLLKFCTVGFCGIGSLIDFILISMQIVGPSDGSSYIIDYYGTRLTRLSITNETFRKTQLYP</sequence>
<protein>
    <recommendedName>
        <fullName>TM2 domain-containing protein 1</fullName>
    </recommendedName>
    <alternativeName>
        <fullName>Amyloid-beta-binding protein</fullName>
        <shortName>mBBP</shortName>
    </alternativeName>
</protein>
<accession>Q99MB3</accession>
<accession>A2ADR1</accession>
<accession>A2ADR4</accession>
<gene>
    <name type="primary">Tm2d1</name>
    <name type="synonym">Bbp</name>
</gene>
<name>TM2D1_MOUSE</name>
<reference key="1">
    <citation type="journal article" date="2001" name="J. Biol. Chem.">
        <title>Beta-amyloid peptide-induced apoptosis regulated by a novel protein containing a G protein activation module.</title>
        <authorList>
            <person name="Kajkowski E.M."/>
            <person name="Lo C.F."/>
            <person name="Ning X."/>
            <person name="Walker S."/>
            <person name="Sofia H.J."/>
            <person name="Wang W."/>
            <person name="Edris W."/>
            <person name="Chanda P."/>
            <person name="Wagner E."/>
            <person name="Vile S."/>
            <person name="Ryan K."/>
            <person name="McHendry-Rinde B."/>
            <person name="Smith S.C."/>
            <person name="Wood A."/>
            <person name="Rhodes K.J."/>
            <person name="Kennedy J.D."/>
            <person name="Bard J."/>
            <person name="Jacobsen J.S."/>
            <person name="Ozenberger B.A."/>
        </authorList>
    </citation>
    <scope>NUCLEOTIDE SEQUENCE [MRNA] (ISOFORM 1)</scope>
    <source>
        <strain>BALB/cJ</strain>
    </source>
</reference>
<reference key="2">
    <citation type="journal article" date="2005" name="Science">
        <title>The transcriptional landscape of the mammalian genome.</title>
        <authorList>
            <person name="Carninci P."/>
            <person name="Kasukawa T."/>
            <person name="Katayama S."/>
            <person name="Gough J."/>
            <person name="Frith M.C."/>
            <person name="Maeda N."/>
            <person name="Oyama R."/>
            <person name="Ravasi T."/>
            <person name="Lenhard B."/>
            <person name="Wells C."/>
            <person name="Kodzius R."/>
            <person name="Shimokawa K."/>
            <person name="Bajic V.B."/>
            <person name="Brenner S.E."/>
            <person name="Batalov S."/>
            <person name="Forrest A.R."/>
            <person name="Zavolan M."/>
            <person name="Davis M.J."/>
            <person name="Wilming L.G."/>
            <person name="Aidinis V."/>
            <person name="Allen J.E."/>
            <person name="Ambesi-Impiombato A."/>
            <person name="Apweiler R."/>
            <person name="Aturaliya R.N."/>
            <person name="Bailey T.L."/>
            <person name="Bansal M."/>
            <person name="Baxter L."/>
            <person name="Beisel K.W."/>
            <person name="Bersano T."/>
            <person name="Bono H."/>
            <person name="Chalk A.M."/>
            <person name="Chiu K.P."/>
            <person name="Choudhary V."/>
            <person name="Christoffels A."/>
            <person name="Clutterbuck D.R."/>
            <person name="Crowe M.L."/>
            <person name="Dalla E."/>
            <person name="Dalrymple B.P."/>
            <person name="de Bono B."/>
            <person name="Della Gatta G."/>
            <person name="di Bernardo D."/>
            <person name="Down T."/>
            <person name="Engstrom P."/>
            <person name="Fagiolini M."/>
            <person name="Faulkner G."/>
            <person name="Fletcher C.F."/>
            <person name="Fukushima T."/>
            <person name="Furuno M."/>
            <person name="Futaki S."/>
            <person name="Gariboldi M."/>
            <person name="Georgii-Hemming P."/>
            <person name="Gingeras T.R."/>
            <person name="Gojobori T."/>
            <person name="Green R.E."/>
            <person name="Gustincich S."/>
            <person name="Harbers M."/>
            <person name="Hayashi Y."/>
            <person name="Hensch T.K."/>
            <person name="Hirokawa N."/>
            <person name="Hill D."/>
            <person name="Huminiecki L."/>
            <person name="Iacono M."/>
            <person name="Ikeo K."/>
            <person name="Iwama A."/>
            <person name="Ishikawa T."/>
            <person name="Jakt M."/>
            <person name="Kanapin A."/>
            <person name="Katoh M."/>
            <person name="Kawasawa Y."/>
            <person name="Kelso J."/>
            <person name="Kitamura H."/>
            <person name="Kitano H."/>
            <person name="Kollias G."/>
            <person name="Krishnan S.P."/>
            <person name="Kruger A."/>
            <person name="Kummerfeld S.K."/>
            <person name="Kurochkin I.V."/>
            <person name="Lareau L.F."/>
            <person name="Lazarevic D."/>
            <person name="Lipovich L."/>
            <person name="Liu J."/>
            <person name="Liuni S."/>
            <person name="McWilliam S."/>
            <person name="Madan Babu M."/>
            <person name="Madera M."/>
            <person name="Marchionni L."/>
            <person name="Matsuda H."/>
            <person name="Matsuzawa S."/>
            <person name="Miki H."/>
            <person name="Mignone F."/>
            <person name="Miyake S."/>
            <person name="Morris K."/>
            <person name="Mottagui-Tabar S."/>
            <person name="Mulder N."/>
            <person name="Nakano N."/>
            <person name="Nakauchi H."/>
            <person name="Ng P."/>
            <person name="Nilsson R."/>
            <person name="Nishiguchi S."/>
            <person name="Nishikawa S."/>
            <person name="Nori F."/>
            <person name="Ohara O."/>
            <person name="Okazaki Y."/>
            <person name="Orlando V."/>
            <person name="Pang K.C."/>
            <person name="Pavan W.J."/>
            <person name="Pavesi G."/>
            <person name="Pesole G."/>
            <person name="Petrovsky N."/>
            <person name="Piazza S."/>
            <person name="Reed J."/>
            <person name="Reid J.F."/>
            <person name="Ring B.Z."/>
            <person name="Ringwald M."/>
            <person name="Rost B."/>
            <person name="Ruan Y."/>
            <person name="Salzberg S.L."/>
            <person name="Sandelin A."/>
            <person name="Schneider C."/>
            <person name="Schoenbach C."/>
            <person name="Sekiguchi K."/>
            <person name="Semple C.A."/>
            <person name="Seno S."/>
            <person name="Sessa L."/>
            <person name="Sheng Y."/>
            <person name="Shibata Y."/>
            <person name="Shimada H."/>
            <person name="Shimada K."/>
            <person name="Silva D."/>
            <person name="Sinclair B."/>
            <person name="Sperling S."/>
            <person name="Stupka E."/>
            <person name="Sugiura K."/>
            <person name="Sultana R."/>
            <person name="Takenaka Y."/>
            <person name="Taki K."/>
            <person name="Tammoja K."/>
            <person name="Tan S.L."/>
            <person name="Tang S."/>
            <person name="Taylor M.S."/>
            <person name="Tegner J."/>
            <person name="Teichmann S.A."/>
            <person name="Ueda H.R."/>
            <person name="van Nimwegen E."/>
            <person name="Verardo R."/>
            <person name="Wei C.L."/>
            <person name="Yagi K."/>
            <person name="Yamanishi H."/>
            <person name="Zabarovsky E."/>
            <person name="Zhu S."/>
            <person name="Zimmer A."/>
            <person name="Hide W."/>
            <person name="Bult C."/>
            <person name="Grimmond S.M."/>
            <person name="Teasdale R.D."/>
            <person name="Liu E.T."/>
            <person name="Brusic V."/>
            <person name="Quackenbush J."/>
            <person name="Wahlestedt C."/>
            <person name="Mattick J.S."/>
            <person name="Hume D.A."/>
            <person name="Kai C."/>
            <person name="Sasaki D."/>
            <person name="Tomaru Y."/>
            <person name="Fukuda S."/>
            <person name="Kanamori-Katayama M."/>
            <person name="Suzuki M."/>
            <person name="Aoki J."/>
            <person name="Arakawa T."/>
            <person name="Iida J."/>
            <person name="Imamura K."/>
            <person name="Itoh M."/>
            <person name="Kato T."/>
            <person name="Kawaji H."/>
            <person name="Kawagashira N."/>
            <person name="Kawashima T."/>
            <person name="Kojima M."/>
            <person name="Kondo S."/>
            <person name="Konno H."/>
            <person name="Nakano K."/>
            <person name="Ninomiya N."/>
            <person name="Nishio T."/>
            <person name="Okada M."/>
            <person name="Plessy C."/>
            <person name="Shibata K."/>
            <person name="Shiraki T."/>
            <person name="Suzuki S."/>
            <person name="Tagami M."/>
            <person name="Waki K."/>
            <person name="Watahiki A."/>
            <person name="Okamura-Oho Y."/>
            <person name="Suzuki H."/>
            <person name="Kawai J."/>
            <person name="Hayashizaki Y."/>
        </authorList>
    </citation>
    <scope>NUCLEOTIDE SEQUENCE [LARGE SCALE MRNA] (ISOFORM 2)</scope>
    <source>
        <strain>C57BL/6J</strain>
        <tissue>Tongue</tissue>
    </source>
</reference>
<reference key="3">
    <citation type="journal article" date="2009" name="PLoS Biol.">
        <title>Lineage-specific biology revealed by a finished genome assembly of the mouse.</title>
        <authorList>
            <person name="Church D.M."/>
            <person name="Goodstadt L."/>
            <person name="Hillier L.W."/>
            <person name="Zody M.C."/>
            <person name="Goldstein S."/>
            <person name="She X."/>
            <person name="Bult C.J."/>
            <person name="Agarwala R."/>
            <person name="Cherry J.L."/>
            <person name="DiCuccio M."/>
            <person name="Hlavina W."/>
            <person name="Kapustin Y."/>
            <person name="Meric P."/>
            <person name="Maglott D."/>
            <person name="Birtle Z."/>
            <person name="Marques A.C."/>
            <person name="Graves T."/>
            <person name="Zhou S."/>
            <person name="Teague B."/>
            <person name="Potamousis K."/>
            <person name="Churas C."/>
            <person name="Place M."/>
            <person name="Herschleb J."/>
            <person name="Runnheim R."/>
            <person name="Forrest D."/>
            <person name="Amos-Landgraf J."/>
            <person name="Schwartz D.C."/>
            <person name="Cheng Z."/>
            <person name="Lindblad-Toh K."/>
            <person name="Eichler E.E."/>
            <person name="Ponting C.P."/>
        </authorList>
    </citation>
    <scope>NUCLEOTIDE SEQUENCE [LARGE SCALE GENOMIC DNA]</scope>
    <source>
        <strain>C57BL/6J</strain>
    </source>
</reference>
<reference key="4">
    <citation type="journal article" date="2004" name="Genome Res.">
        <title>The status, quality, and expansion of the NIH full-length cDNA project: the Mammalian Gene Collection (MGC).</title>
        <authorList>
            <consortium name="The MGC Project Team"/>
        </authorList>
    </citation>
    <scope>NUCLEOTIDE SEQUENCE [LARGE SCALE MRNA] (ISOFORM 1)</scope>
    <source>
        <tissue>Testis</tissue>
    </source>
</reference>
<comment type="function">
    <text evidence="1">May participate in amyloid-beta-induced apoptosis via its interaction with beta-APP42.</text>
</comment>
<comment type="subunit">
    <text evidence="1">Interacts with APP beta-APP42 (amyloid-beta protein 42).</text>
</comment>
<comment type="subcellular location">
    <subcellularLocation>
        <location evidence="1">Membrane</location>
        <topology evidence="1">Multi-pass membrane protein</topology>
    </subcellularLocation>
</comment>
<comment type="alternative products">
    <event type="alternative splicing"/>
    <isoform>
        <id>Q99MB3-1</id>
        <name>1</name>
        <sequence type="displayed"/>
    </isoform>
    <isoform>
        <id>Q99MB3-2</id>
        <name>2</name>
        <sequence type="described" ref="VSP_027494"/>
    </isoform>
</comment>
<comment type="PTM">
    <text evidence="1">N-glycosylated.</text>
</comment>
<comment type="similarity">
    <text evidence="6">Belongs to the TM2 family.</text>
</comment>
<comment type="sequence caution" evidence="6">
    <conflict type="frameshift">
        <sequence resource="EMBL" id="AK009511"/>
    </conflict>
</comment>
<comment type="sequence caution" evidence="6">
    <conflict type="erroneous gene model prediction">
        <sequence resource="EMBL-CDS" id="CAM26981"/>
    </conflict>
</comment>
<feature type="signal peptide" evidence="2">
    <location>
        <begin position="1"/>
        <end position="37"/>
    </location>
</feature>
<feature type="chain" id="PRO_0000298979" description="TM2 domain-containing protein 1">
    <location>
        <begin position="38"/>
        <end position="208"/>
    </location>
</feature>
<feature type="topological domain" description="Extracellular" evidence="6">
    <location>
        <begin position="38"/>
        <end position="129"/>
    </location>
</feature>
<feature type="transmembrane region" description="Helical" evidence="3">
    <location>
        <begin position="130"/>
        <end position="150"/>
    </location>
</feature>
<feature type="topological domain" description="Cytoplasmic" evidence="6">
    <location>
        <begin position="151"/>
        <end position="154"/>
    </location>
</feature>
<feature type="transmembrane region" description="Helical" evidence="3">
    <location>
        <begin position="155"/>
        <end position="175"/>
    </location>
</feature>
<feature type="topological domain" description="Extracellular" evidence="6">
    <location>
        <begin position="176"/>
        <end position="208"/>
    </location>
</feature>
<feature type="domain" description="TM2" evidence="3">
    <location>
        <begin position="119"/>
        <end position="167"/>
    </location>
</feature>
<feature type="glycosylation site" description="N-linked (GlcNAc...) asparagine" evidence="4">
    <location>
        <position position="73"/>
    </location>
</feature>
<feature type="glycosylation site" description="N-linked (GlcNAc...) asparagine" evidence="4">
    <location>
        <position position="76"/>
    </location>
</feature>
<feature type="glycosylation site" description="N-linked (GlcNAc...) asparagine" evidence="4">
    <location>
        <position position="97"/>
    </location>
</feature>
<feature type="glycosylation site" description="N-linked (GlcNAc...) asparagine" evidence="4">
    <location>
        <position position="198"/>
    </location>
</feature>
<feature type="splice variant" id="VSP_027494" description="In isoform 2." evidence="5">
    <location>
        <begin position="81"/>
        <end position="85"/>
    </location>
</feature>
<feature type="sequence conflict" description="In Ref. 2; AK009511." evidence="6" ref="2">
    <original>P</original>
    <variation>S</variation>
    <location>
        <position position="6"/>
    </location>
</feature>
<feature type="sequence conflict" description="In Ref. 2; AK009511." evidence="6" ref="2">
    <original>A</original>
    <variation>E</variation>
    <location>
        <position position="86"/>
    </location>
</feature>
<proteinExistence type="evidence at transcript level"/>
<evidence type="ECO:0000250" key="1"/>
<evidence type="ECO:0000250" key="2">
    <source>
        <dbReference type="UniProtKB" id="Q9BX74"/>
    </source>
</evidence>
<evidence type="ECO:0000255" key="3"/>
<evidence type="ECO:0000255" key="4">
    <source>
        <dbReference type="PROSITE-ProRule" id="PRU00498"/>
    </source>
</evidence>
<evidence type="ECO:0000303" key="5">
    <source>
    </source>
</evidence>
<evidence type="ECO:0000305" key="6"/>